<evidence type="ECO:0000255" key="1">
    <source>
        <dbReference type="HAMAP-Rule" id="MF_01147"/>
    </source>
</evidence>
<evidence type="ECO:0000256" key="2">
    <source>
        <dbReference type="SAM" id="MobiDB-lite"/>
    </source>
</evidence>
<proteinExistence type="inferred from homology"/>
<sequence>MRHRRRPGGRSTAGGTPVSQLSIPSPSIEAFHLGPLTIHIYALCILAGIVVAYISGGRRYQARGGKQEQFEELCALAVIAGIIGGRLYHVITDHQLYFGPGRTWYHCFFIWQGGLGIWGAISLGGLAIWLYCRRKGIRFASVADSLAPGILAAQAIGRLGNWFNQELFGRPTSLPWGLEIDLSHRPAGYLQYATFHPTFLYELVWSLVGAVFLLWVDRRWTLDHGRLFTLYVAIYTFGRFWVERLRIDPAHHVGQWRLNDVTALVVFTGAVVILIVLQRRYGKGDEHSSCPAHKTR</sequence>
<accession>Q6A8N5</accession>
<comment type="function">
    <text evidence="1">Catalyzes the transfer of the diacylglyceryl group from phosphatidylglycerol to the sulfhydryl group of the N-terminal cysteine of a prolipoprotein, the first step in the formation of mature lipoproteins.</text>
</comment>
<comment type="catalytic activity">
    <reaction evidence="1">
        <text>L-cysteinyl-[prolipoprotein] + a 1,2-diacyl-sn-glycero-3-phospho-(1'-sn-glycerol) = an S-1,2-diacyl-sn-glyceryl-L-cysteinyl-[prolipoprotein] + sn-glycerol 1-phosphate + H(+)</text>
        <dbReference type="Rhea" id="RHEA:56712"/>
        <dbReference type="Rhea" id="RHEA-COMP:14679"/>
        <dbReference type="Rhea" id="RHEA-COMP:14680"/>
        <dbReference type="ChEBI" id="CHEBI:15378"/>
        <dbReference type="ChEBI" id="CHEBI:29950"/>
        <dbReference type="ChEBI" id="CHEBI:57685"/>
        <dbReference type="ChEBI" id="CHEBI:64716"/>
        <dbReference type="ChEBI" id="CHEBI:140658"/>
        <dbReference type="EC" id="2.5.1.145"/>
    </reaction>
</comment>
<comment type="pathway">
    <text evidence="1">Protein modification; lipoprotein biosynthesis (diacylglyceryl transfer).</text>
</comment>
<comment type="subcellular location">
    <subcellularLocation>
        <location evidence="1">Cell membrane</location>
        <topology evidence="1">Multi-pass membrane protein</topology>
    </subcellularLocation>
</comment>
<comment type="similarity">
    <text evidence="1">Belongs to the Lgt family.</text>
</comment>
<gene>
    <name evidence="1" type="primary">lgt</name>
    <name type="ordered locus">PPA1133</name>
</gene>
<organism>
    <name type="scientific">Cutibacterium acnes (strain DSM 16379 / KPA171202)</name>
    <name type="common">Propionibacterium acnes</name>
    <dbReference type="NCBI Taxonomy" id="267747"/>
    <lineage>
        <taxon>Bacteria</taxon>
        <taxon>Bacillati</taxon>
        <taxon>Actinomycetota</taxon>
        <taxon>Actinomycetes</taxon>
        <taxon>Propionibacteriales</taxon>
        <taxon>Propionibacteriaceae</taxon>
        <taxon>Cutibacterium</taxon>
    </lineage>
</organism>
<feature type="chain" id="PRO_0000172650" description="Phosphatidylglycerol--prolipoprotein diacylglyceryl transferase">
    <location>
        <begin position="1"/>
        <end position="296"/>
    </location>
</feature>
<feature type="transmembrane region" description="Helical" evidence="1">
    <location>
        <begin position="34"/>
        <end position="54"/>
    </location>
</feature>
<feature type="transmembrane region" description="Helical" evidence="1">
    <location>
        <begin position="72"/>
        <end position="92"/>
    </location>
</feature>
<feature type="transmembrane region" description="Helical" evidence="1">
    <location>
        <begin position="108"/>
        <end position="128"/>
    </location>
</feature>
<feature type="transmembrane region" description="Helical" evidence="1">
    <location>
        <begin position="136"/>
        <end position="158"/>
    </location>
</feature>
<feature type="transmembrane region" description="Helical" evidence="1">
    <location>
        <begin position="195"/>
        <end position="215"/>
    </location>
</feature>
<feature type="transmembrane region" description="Helical" evidence="1">
    <location>
        <begin position="227"/>
        <end position="243"/>
    </location>
</feature>
<feature type="transmembrane region" description="Helical" evidence="1">
    <location>
        <begin position="258"/>
        <end position="278"/>
    </location>
</feature>
<feature type="region of interest" description="Disordered" evidence="2">
    <location>
        <begin position="1"/>
        <end position="21"/>
    </location>
</feature>
<feature type="binding site" evidence="1">
    <location>
        <position position="158"/>
    </location>
    <ligand>
        <name>a 1,2-diacyl-sn-glycero-3-phospho-(1'-sn-glycerol)</name>
        <dbReference type="ChEBI" id="CHEBI:64716"/>
    </ligand>
</feature>
<keyword id="KW-1003">Cell membrane</keyword>
<keyword id="KW-0472">Membrane</keyword>
<keyword id="KW-0808">Transferase</keyword>
<keyword id="KW-0812">Transmembrane</keyword>
<keyword id="KW-1133">Transmembrane helix</keyword>
<dbReference type="EC" id="2.5.1.145" evidence="1"/>
<dbReference type="EMBL" id="AE017283">
    <property type="protein sequence ID" value="AAT82881.1"/>
    <property type="molecule type" value="Genomic_DNA"/>
</dbReference>
<dbReference type="SMR" id="Q6A8N5"/>
<dbReference type="EnsemblBacteria" id="AAT82881">
    <property type="protein sequence ID" value="AAT82881"/>
    <property type="gene ID" value="PPA1133"/>
</dbReference>
<dbReference type="KEGG" id="pac:PPA1133"/>
<dbReference type="eggNOG" id="COG0682">
    <property type="taxonomic scope" value="Bacteria"/>
</dbReference>
<dbReference type="HOGENOM" id="CLU_013386_2_0_11"/>
<dbReference type="UniPathway" id="UPA00664"/>
<dbReference type="Proteomes" id="UP000000603">
    <property type="component" value="Chromosome"/>
</dbReference>
<dbReference type="GO" id="GO:0005886">
    <property type="term" value="C:plasma membrane"/>
    <property type="evidence" value="ECO:0007669"/>
    <property type="project" value="UniProtKB-SubCell"/>
</dbReference>
<dbReference type="GO" id="GO:0008961">
    <property type="term" value="F:phosphatidylglycerol-prolipoprotein diacylglyceryl transferase activity"/>
    <property type="evidence" value="ECO:0007669"/>
    <property type="project" value="UniProtKB-UniRule"/>
</dbReference>
<dbReference type="GO" id="GO:0042158">
    <property type="term" value="P:lipoprotein biosynthetic process"/>
    <property type="evidence" value="ECO:0007669"/>
    <property type="project" value="UniProtKB-UniRule"/>
</dbReference>
<dbReference type="HAMAP" id="MF_01147">
    <property type="entry name" value="Lgt"/>
    <property type="match status" value="1"/>
</dbReference>
<dbReference type="InterPro" id="IPR001640">
    <property type="entry name" value="Lgt"/>
</dbReference>
<dbReference type="NCBIfam" id="TIGR00544">
    <property type="entry name" value="lgt"/>
    <property type="match status" value="1"/>
</dbReference>
<dbReference type="PANTHER" id="PTHR30589:SF0">
    <property type="entry name" value="PHOSPHATIDYLGLYCEROL--PROLIPOPROTEIN DIACYLGLYCERYL TRANSFERASE"/>
    <property type="match status" value="1"/>
</dbReference>
<dbReference type="PANTHER" id="PTHR30589">
    <property type="entry name" value="PROLIPOPROTEIN DIACYLGLYCERYL TRANSFERASE"/>
    <property type="match status" value="1"/>
</dbReference>
<dbReference type="Pfam" id="PF01790">
    <property type="entry name" value="LGT"/>
    <property type="match status" value="1"/>
</dbReference>
<dbReference type="PROSITE" id="PS01311">
    <property type="entry name" value="LGT"/>
    <property type="match status" value="1"/>
</dbReference>
<reference key="1">
    <citation type="journal article" date="2004" name="Science">
        <title>The complete genome sequence of Propionibacterium acnes, a commensal of human skin.</title>
        <authorList>
            <person name="Brueggemann H."/>
            <person name="Henne A."/>
            <person name="Hoster F."/>
            <person name="Liesegang H."/>
            <person name="Wiezer A."/>
            <person name="Strittmatter A."/>
            <person name="Hujer S."/>
            <person name="Duerre P."/>
            <person name="Gottschalk G."/>
        </authorList>
    </citation>
    <scope>NUCLEOTIDE SEQUENCE [LARGE SCALE GENOMIC DNA]</scope>
    <source>
        <strain>DSM 16379 / KPA171202</strain>
    </source>
</reference>
<name>LGT_CUTAK</name>
<protein>
    <recommendedName>
        <fullName evidence="1">Phosphatidylglycerol--prolipoprotein diacylglyceryl transferase</fullName>
        <ecNumber evidence="1">2.5.1.145</ecNumber>
    </recommendedName>
</protein>